<reference key="1">
    <citation type="journal article" date="2004" name="Genome Res.">
        <title>The status, quality, and expansion of the NIH full-length cDNA project: the Mammalian Gene Collection (MGC).</title>
        <authorList>
            <consortium name="The MGC Project Team"/>
        </authorList>
    </citation>
    <scope>NUCLEOTIDE SEQUENCE [LARGE SCALE MRNA]</scope>
</reference>
<reference key="2">
    <citation type="journal article" date="1998" name="Genomics">
        <title>Characterization of the genes for mouse LERK-3/Ephrin-A3 (Epl3), mouse LERK-4/Ephrin-A4 (Epl4), and human LERK-6/Ephrin-A2 (EPLG6): conservation of intron/exon structure.</title>
        <authorList>
            <person name="Cerretti D.P."/>
            <person name="Nelson N."/>
        </authorList>
    </citation>
    <scope>NUCLEOTIDE SEQUENCE [GENOMIC DNA] OF 44-230</scope>
    <source>
        <strain>129</strain>
    </source>
</reference>
<reference key="3">
    <citation type="journal article" date="1996" name="Dev. Biol.">
        <title>Distinct and overlapping expression patterns of ligands for Eph-related receptor tyrosine kinases during mouse embryogenesis.</title>
        <authorList>
            <person name="Flenniken A.M."/>
            <person name="Gale N.W."/>
            <person name="Yancopoulos G.D."/>
            <person name="Wilkinson D.G."/>
        </authorList>
    </citation>
    <scope>NUCLEOTIDE SEQUENCE [MRNA] OF 60-121</scope>
</reference>
<reference key="4">
    <citation type="journal article" date="1997" name="Oncogene">
        <title>The Eek receptor, a member of the Eph family of tyrosine protein kinases, can be activated by three different Eph family ligands.</title>
        <authorList>
            <person name="Park S."/>
            <person name="Sanchez M.P."/>
        </authorList>
    </citation>
    <scope>FUNCTION IN EPHA8 ACTIVATION</scope>
    <scope>INTERACTION WITH EPHA8</scope>
</reference>
<reference key="5">
    <citation type="journal article" date="2009" name="Nat. Biotechnol.">
        <title>Mass-spectrometric identification and relative quantification of N-linked cell surface glycoproteins.</title>
        <authorList>
            <person name="Wollscheid B."/>
            <person name="Bausch-Fluck D."/>
            <person name="Henderson C."/>
            <person name="O'Brien R."/>
            <person name="Bibel M."/>
            <person name="Schiess R."/>
            <person name="Aebersold R."/>
            <person name="Watts J.D."/>
        </authorList>
    </citation>
    <scope>GLYCOSYLATION [LARGE SCALE ANALYSIS] AT ASN-38</scope>
</reference>
<reference key="6">
    <citation type="journal article" date="2016" name="Front. Cell Dev. Biol.">
        <title>Gene expression profiling of muscle stem cells identifies novel regulators of postnatal myogenesis.</title>
        <authorList>
            <person name="Alonso-Martin S."/>
            <person name="Rochat A."/>
            <person name="Mademtzoglou D."/>
            <person name="Morais J."/>
            <person name="de Reynies A."/>
            <person name="Aurade F."/>
            <person name="Chang T.H."/>
            <person name="Zammit P.S."/>
            <person name="Relaix F."/>
        </authorList>
    </citation>
    <scope>DEVELOPMENTAL STAGE</scope>
    <scope>TISSUE SPECIFICITY</scope>
</reference>
<evidence type="ECO:0000255" key="1"/>
<evidence type="ECO:0000255" key="2">
    <source>
        <dbReference type="PROSITE-ProRule" id="PRU00884"/>
    </source>
</evidence>
<evidence type="ECO:0000269" key="3">
    <source>
    </source>
</evidence>
<evidence type="ECO:0000269" key="4">
    <source>
    </source>
</evidence>
<evidence type="ECO:0000269" key="5">
    <source>
    </source>
</evidence>
<evidence type="ECO:0000305" key="6"/>
<accession>O08545</accession>
<accession>O55217</accession>
<accession>Q08AV0</accession>
<protein>
    <recommendedName>
        <fullName>Ephrin-A3</fullName>
    </recommendedName>
    <alternativeName>
        <fullName>EHK1 ligand</fullName>
        <shortName>EHK1-L</shortName>
    </alternativeName>
    <alternativeName>
        <fullName>EPH-related receptor tyrosine kinase ligand 3</fullName>
        <shortName>LERK-3</shortName>
    </alternativeName>
</protein>
<dbReference type="EMBL" id="BC107002">
    <property type="protein sequence ID" value="AAI07003.1"/>
    <property type="molecule type" value="mRNA"/>
</dbReference>
<dbReference type="EMBL" id="BC125003">
    <property type="protein sequence ID" value="AAI25004.1"/>
    <property type="molecule type" value="mRNA"/>
</dbReference>
<dbReference type="EMBL" id="U92885">
    <property type="protein sequence ID" value="AAC39961.1"/>
    <property type="molecule type" value="Genomic_DNA"/>
</dbReference>
<dbReference type="EMBL" id="U90666">
    <property type="protein sequence ID" value="AAB50241.1"/>
    <property type="molecule type" value="mRNA"/>
</dbReference>
<dbReference type="CCDS" id="CCDS38488.1"/>
<dbReference type="RefSeq" id="NP_034238.1">
    <property type="nucleotide sequence ID" value="NM_010108.2"/>
</dbReference>
<dbReference type="SMR" id="O08545"/>
<dbReference type="FunCoup" id="O08545">
    <property type="interactions" value="1618"/>
</dbReference>
<dbReference type="STRING" id="10090.ENSMUSP00000029673"/>
<dbReference type="GlyConnect" id="2291">
    <property type="glycosylation" value="5 N-Linked glycans (1 site)"/>
</dbReference>
<dbReference type="GlyCosmos" id="O08545">
    <property type="glycosylation" value="4 sites, 5 glycans"/>
</dbReference>
<dbReference type="GlyGen" id="O08545">
    <property type="glycosylation" value="4 sites, 6 N-linked glycans (1 site)"/>
</dbReference>
<dbReference type="iPTMnet" id="O08545"/>
<dbReference type="PhosphoSitePlus" id="O08545"/>
<dbReference type="PaxDb" id="10090-ENSMUSP00000029673"/>
<dbReference type="ProteomicsDB" id="277801"/>
<dbReference type="Antibodypedia" id="4186">
    <property type="antibodies" value="349 antibodies from 31 providers"/>
</dbReference>
<dbReference type="DNASU" id="13638"/>
<dbReference type="Ensembl" id="ENSMUST00000029673.10">
    <property type="protein sequence ID" value="ENSMUSP00000029673.6"/>
    <property type="gene ID" value="ENSMUSG00000028039.12"/>
</dbReference>
<dbReference type="GeneID" id="13638"/>
<dbReference type="KEGG" id="mmu:13638"/>
<dbReference type="UCSC" id="uc008pyq.1">
    <property type="organism name" value="mouse"/>
</dbReference>
<dbReference type="AGR" id="MGI:106644"/>
<dbReference type="CTD" id="1944"/>
<dbReference type="MGI" id="MGI:106644">
    <property type="gene designation" value="Efna3"/>
</dbReference>
<dbReference type="VEuPathDB" id="HostDB:ENSMUSG00000028039"/>
<dbReference type="eggNOG" id="KOG3858">
    <property type="taxonomic scope" value="Eukaryota"/>
</dbReference>
<dbReference type="GeneTree" id="ENSGT00940000161355"/>
<dbReference type="InParanoid" id="O08545"/>
<dbReference type="OMA" id="LCNFPLC"/>
<dbReference type="OrthoDB" id="9940835at2759"/>
<dbReference type="PhylomeDB" id="O08545"/>
<dbReference type="Reactome" id="R-MMU-2682334">
    <property type="pathway name" value="EPH-Ephrin signaling"/>
</dbReference>
<dbReference type="Reactome" id="R-MMU-3928663">
    <property type="pathway name" value="EPHA-mediated growth cone collapse"/>
</dbReference>
<dbReference type="Reactome" id="R-MMU-3928665">
    <property type="pathway name" value="EPH-ephrin mediated repulsion of cells"/>
</dbReference>
<dbReference type="BioGRID-ORCS" id="13638">
    <property type="hits" value="7 hits in 80 CRISPR screens"/>
</dbReference>
<dbReference type="PRO" id="PR:O08545"/>
<dbReference type="Proteomes" id="UP000000589">
    <property type="component" value="Chromosome 3"/>
</dbReference>
<dbReference type="RNAct" id="O08545">
    <property type="molecule type" value="protein"/>
</dbReference>
<dbReference type="Bgee" id="ENSMUSG00000028039">
    <property type="expression patterns" value="Expressed in lip and 215 other cell types or tissues"/>
</dbReference>
<dbReference type="ExpressionAtlas" id="O08545">
    <property type="expression patterns" value="baseline and differential"/>
</dbReference>
<dbReference type="GO" id="GO:0005886">
    <property type="term" value="C:plasma membrane"/>
    <property type="evidence" value="ECO:0007669"/>
    <property type="project" value="UniProtKB-SubCell"/>
</dbReference>
<dbReference type="GO" id="GO:0098552">
    <property type="term" value="C:side of membrane"/>
    <property type="evidence" value="ECO:0007669"/>
    <property type="project" value="UniProtKB-KW"/>
</dbReference>
<dbReference type="GO" id="GO:0046875">
    <property type="term" value="F:ephrin receptor binding"/>
    <property type="evidence" value="ECO:0000353"/>
    <property type="project" value="UniProtKB"/>
</dbReference>
<dbReference type="GO" id="GO:0048013">
    <property type="term" value="P:ephrin receptor signaling pathway"/>
    <property type="evidence" value="ECO:0000314"/>
    <property type="project" value="UniProtKB"/>
</dbReference>
<dbReference type="GO" id="GO:0016525">
    <property type="term" value="P:negative regulation of angiogenesis"/>
    <property type="evidence" value="ECO:0007669"/>
    <property type="project" value="Ensembl"/>
</dbReference>
<dbReference type="GO" id="GO:1902993">
    <property type="term" value="P:positive regulation of amyloid precursor protein catabolic process"/>
    <property type="evidence" value="ECO:0007669"/>
    <property type="project" value="Ensembl"/>
</dbReference>
<dbReference type="CDD" id="cd10425">
    <property type="entry name" value="Ephrin-A_Ectodomain"/>
    <property type="match status" value="1"/>
</dbReference>
<dbReference type="FunFam" id="2.60.40.420:FF:000030">
    <property type="entry name" value="ephrin-A3 isoform X1"/>
    <property type="match status" value="1"/>
</dbReference>
<dbReference type="Gene3D" id="2.60.40.420">
    <property type="entry name" value="Cupredoxins - blue copper proteins"/>
    <property type="match status" value="1"/>
</dbReference>
<dbReference type="InterPro" id="IPR008972">
    <property type="entry name" value="Cupredoxin"/>
</dbReference>
<dbReference type="InterPro" id="IPR031328">
    <property type="entry name" value="Ephrin"/>
</dbReference>
<dbReference type="InterPro" id="IPR034252">
    <property type="entry name" value="Ephrin-A_Ecto"/>
</dbReference>
<dbReference type="InterPro" id="IPR019765">
    <property type="entry name" value="Ephrin_CS"/>
</dbReference>
<dbReference type="InterPro" id="IPR001799">
    <property type="entry name" value="Ephrin_RBD"/>
</dbReference>
<dbReference type="PANTHER" id="PTHR11304">
    <property type="entry name" value="EPHRIN"/>
    <property type="match status" value="1"/>
</dbReference>
<dbReference type="PANTHER" id="PTHR11304:SF5">
    <property type="entry name" value="EPHRIN-A3"/>
    <property type="match status" value="1"/>
</dbReference>
<dbReference type="Pfam" id="PF00812">
    <property type="entry name" value="Ephrin"/>
    <property type="match status" value="1"/>
</dbReference>
<dbReference type="PRINTS" id="PR01347">
    <property type="entry name" value="EPHRIN"/>
</dbReference>
<dbReference type="SUPFAM" id="SSF49503">
    <property type="entry name" value="Cupredoxins"/>
    <property type="match status" value="1"/>
</dbReference>
<dbReference type="PROSITE" id="PS01299">
    <property type="entry name" value="EPHRIN_RBD_1"/>
    <property type="match status" value="1"/>
</dbReference>
<dbReference type="PROSITE" id="PS51551">
    <property type="entry name" value="EPHRIN_RBD_2"/>
    <property type="match status" value="1"/>
</dbReference>
<keyword id="KW-1003">Cell membrane</keyword>
<keyword id="KW-1015">Disulfide bond</keyword>
<keyword id="KW-0325">Glycoprotein</keyword>
<keyword id="KW-0336">GPI-anchor</keyword>
<keyword id="KW-0449">Lipoprotein</keyword>
<keyword id="KW-0472">Membrane</keyword>
<keyword id="KW-1185">Reference proteome</keyword>
<keyword id="KW-0732">Signal</keyword>
<proteinExistence type="evidence at protein level"/>
<name>EFNA3_MOUSE</name>
<sequence length="230" mass="25632">MAAAPLLLLLLLVPVPLLPLLAQGPGGALGNRHAVYWNSSNQHLRREGYTVQVNVNDYLDIYCPHYNSSGPGGGAEQYVLYMVNLSGYRTCNASQGSKRWECNRQHASHSPIKFSEKFQRYSAFSLGYEFHAGQEYYYISTPTHNLHWKCLRMKVFVCCASTSHSGEKPVPTLPQFTMGPNVKINVLEDFEGENPQVPKLEKSISGTSPKREHLPLAVGIAFFLMTLLAS</sequence>
<gene>
    <name type="primary">Efna3</name>
    <name type="synonym">Epl3</name>
    <name type="synonym">Eplg3</name>
    <name type="synonym">Lerk3</name>
</gene>
<comment type="function">
    <text evidence="5">Cell surface GPI-bound ligand for Eph receptors, a family of receptor tyrosine kinases which are crucial for migration, repulsion and adhesion during neuronal, vascular and epithelial development. Binds promiscuously Eph receptors residing on adjacent cells, leading to contact-dependent bidirectional signaling into neighboring cells. The signaling pathway downstream of the receptor is referred to as forward signaling while the signaling pathway downstream of the ephrin ligand is referred to as reverse signaling.</text>
</comment>
<comment type="subunit">
    <text evidence="5">Interacts with EPHA8; activates EPHA8.</text>
</comment>
<comment type="subcellular location">
    <subcellularLocation>
        <location>Cell membrane</location>
        <topology>Lipid-anchor</topology>
        <topology>GPI-anchor</topology>
    </subcellularLocation>
</comment>
<comment type="tissue specificity">
    <text evidence="4">Expressed in myogenic progenitor cells.</text>
</comment>
<comment type="developmental stage">
    <text evidence="4">In myogenic progenitor cells, highly expressed at 11.5 dpc and ceases its expression at the late fetal stage (17.5 dpc).</text>
</comment>
<comment type="similarity">
    <text evidence="2">Belongs to the ephrin family.</text>
</comment>
<organism>
    <name type="scientific">Mus musculus</name>
    <name type="common">Mouse</name>
    <dbReference type="NCBI Taxonomy" id="10090"/>
    <lineage>
        <taxon>Eukaryota</taxon>
        <taxon>Metazoa</taxon>
        <taxon>Chordata</taxon>
        <taxon>Craniata</taxon>
        <taxon>Vertebrata</taxon>
        <taxon>Euteleostomi</taxon>
        <taxon>Mammalia</taxon>
        <taxon>Eutheria</taxon>
        <taxon>Euarchontoglires</taxon>
        <taxon>Glires</taxon>
        <taxon>Rodentia</taxon>
        <taxon>Myomorpha</taxon>
        <taxon>Muroidea</taxon>
        <taxon>Muridae</taxon>
        <taxon>Murinae</taxon>
        <taxon>Mus</taxon>
        <taxon>Mus</taxon>
    </lineage>
</organism>
<feature type="signal peptide" evidence="1">
    <location>
        <begin position="1"/>
        <end position="22"/>
    </location>
</feature>
<feature type="chain" id="PRO_0000008371" description="Ephrin-A3">
    <location>
        <begin position="23"/>
        <end position="206"/>
    </location>
</feature>
<feature type="propeptide" id="PRO_0000008372" description="Removed in mature form" evidence="1">
    <location>
        <begin position="207"/>
        <end position="230"/>
    </location>
</feature>
<feature type="domain" description="Ephrin RBD" evidence="2">
    <location>
        <begin position="30"/>
        <end position="161"/>
    </location>
</feature>
<feature type="lipid moiety-binding region" description="GPI-anchor amidated glycine" evidence="1">
    <location>
        <position position="206"/>
    </location>
</feature>
<feature type="glycosylation site" description="N-linked (GlcNAc...) asparagine" evidence="3">
    <location>
        <position position="38"/>
    </location>
</feature>
<feature type="glycosylation site" description="N-linked (GlcNAc...) asparagine" evidence="1">
    <location>
        <position position="67"/>
    </location>
</feature>
<feature type="glycosylation site" description="N-linked (GlcNAc...) asparagine" evidence="1">
    <location>
        <position position="84"/>
    </location>
</feature>
<feature type="glycosylation site" description="N-linked (GlcNAc...) asparagine" evidence="1">
    <location>
        <position position="92"/>
    </location>
</feature>
<feature type="disulfide bond" evidence="2">
    <location>
        <begin position="63"/>
        <end position="102"/>
    </location>
</feature>
<feature type="disulfide bond" evidence="2">
    <location>
        <begin position="91"/>
        <end position="150"/>
    </location>
</feature>
<feature type="sequence conflict" description="In Ref. 3; AAB50241." evidence="6" ref="3">
    <original>Y</original>
    <variation>I</variation>
    <location>
        <position position="62"/>
    </location>
</feature>
<feature type="sequence conflict" description="In Ref. 3; AAB50241." evidence="6" ref="3">
    <original>EQ</original>
    <variation>DR</variation>
    <location>
        <begin position="76"/>
        <end position="77"/>
    </location>
</feature>
<feature type="sequence conflict" description="In Ref. 3; AAB50241." evidence="6" ref="3">
    <original>RT</original>
    <variation>QP</variation>
    <location>
        <begin position="89"/>
        <end position="90"/>
    </location>
</feature>
<feature type="sequence conflict" description="In Ref. 3; AAB50241." evidence="6" ref="3">
    <original>Y</original>
    <variation>W</variation>
    <location>
        <position position="121"/>
    </location>
</feature>